<dbReference type="EMBL" id="L23431">
    <property type="protein sequence ID" value="AAA68207.1"/>
    <property type="molecule type" value="mRNA"/>
</dbReference>
<dbReference type="PIR" id="I50143">
    <property type="entry name" value="I50143"/>
</dbReference>
<dbReference type="SMR" id="P48251"/>
<dbReference type="GlyCosmos" id="P48251">
    <property type="glycosylation" value="1 site, No reported glycans"/>
</dbReference>
<dbReference type="GO" id="GO:0005737">
    <property type="term" value="C:cytoplasm"/>
    <property type="evidence" value="ECO:0007669"/>
    <property type="project" value="TreeGrafter"/>
</dbReference>
<dbReference type="GO" id="GO:0005615">
    <property type="term" value="C:extracellular space"/>
    <property type="evidence" value="ECO:0007669"/>
    <property type="project" value="TreeGrafter"/>
</dbReference>
<dbReference type="GO" id="GO:0005179">
    <property type="term" value="F:hormone activity"/>
    <property type="evidence" value="ECO:0007669"/>
    <property type="project" value="UniProtKB-KW"/>
</dbReference>
<dbReference type="GO" id="GO:0007186">
    <property type="term" value="P:G protein-coupled receptor signaling pathway"/>
    <property type="evidence" value="ECO:0007669"/>
    <property type="project" value="TreeGrafter"/>
</dbReference>
<dbReference type="CDD" id="cd00069">
    <property type="entry name" value="GHB_like"/>
    <property type="match status" value="1"/>
</dbReference>
<dbReference type="FunFam" id="2.10.90.10:FF:000007">
    <property type="entry name" value="Luteinizing hormone beta subunit"/>
    <property type="match status" value="1"/>
</dbReference>
<dbReference type="Gene3D" id="2.10.90.10">
    <property type="entry name" value="Cystine-knot cytokines"/>
    <property type="match status" value="1"/>
</dbReference>
<dbReference type="InterPro" id="IPR029034">
    <property type="entry name" value="Cystine-knot_cytokine"/>
</dbReference>
<dbReference type="InterPro" id="IPR006208">
    <property type="entry name" value="Glyco_hormone_CN"/>
</dbReference>
<dbReference type="InterPro" id="IPR001545">
    <property type="entry name" value="Gonadotropin_bsu"/>
</dbReference>
<dbReference type="InterPro" id="IPR018245">
    <property type="entry name" value="Gonadotropin_bsu_CS"/>
</dbReference>
<dbReference type="PANTHER" id="PTHR11515">
    <property type="entry name" value="GLYCOPROTEIN HORMONE BETA CHAIN"/>
    <property type="match status" value="1"/>
</dbReference>
<dbReference type="PANTHER" id="PTHR11515:SF11">
    <property type="entry name" value="LUTROPIN SUBUNIT BETA"/>
    <property type="match status" value="1"/>
</dbReference>
<dbReference type="Pfam" id="PF00007">
    <property type="entry name" value="Cys_knot"/>
    <property type="match status" value="1"/>
</dbReference>
<dbReference type="SMART" id="SM00068">
    <property type="entry name" value="GHB"/>
    <property type="match status" value="1"/>
</dbReference>
<dbReference type="SUPFAM" id="SSF57501">
    <property type="entry name" value="Cystine-knot cytokines"/>
    <property type="match status" value="1"/>
</dbReference>
<dbReference type="PROSITE" id="PS00261">
    <property type="entry name" value="GLYCO_HORMONE_BETA_1"/>
    <property type="match status" value="1"/>
</dbReference>
<dbReference type="PROSITE" id="PS00689">
    <property type="entry name" value="GLYCO_HORMONE_BETA_2"/>
    <property type="match status" value="1"/>
</dbReference>
<keyword id="KW-1015">Disulfide bond</keyword>
<keyword id="KW-0325">Glycoprotein</keyword>
<keyword id="KW-0372">Hormone</keyword>
<keyword id="KW-0964">Secreted</keyword>
<keyword id="KW-0732">Signal</keyword>
<protein>
    <recommendedName>
        <fullName>Gonadotropin subunit beta-2</fullName>
    </recommendedName>
    <alternativeName>
        <fullName>GTH-II-beta</fullName>
    </alternativeName>
    <alternativeName>
        <fullName>Gonadotropin beta-II chain</fullName>
    </alternativeName>
</protein>
<gene>
    <name type="primary">cgbb</name>
</gene>
<sequence>MLGLHVGTLMISLFLCILLEPVEGSLMQPCQPINQTVSLEKEGCPTCLVIQTPICSGHCFTKELVFKSPFSTVYQHVCTYRDVRYETICLPDCSPWVDPHVTYPVALSCDCSLCNMDTSDCTIESLQPDLCMTQRVLADGMW</sequence>
<organism>
    <name type="scientific">Coregonus autumnalis</name>
    <name type="common">Arctic cisco</name>
    <name type="synonym">Salmo autumnalis</name>
    <dbReference type="NCBI Taxonomy" id="27773"/>
    <lineage>
        <taxon>Eukaryota</taxon>
        <taxon>Metazoa</taxon>
        <taxon>Chordata</taxon>
        <taxon>Craniata</taxon>
        <taxon>Vertebrata</taxon>
        <taxon>Euteleostomi</taxon>
        <taxon>Actinopterygii</taxon>
        <taxon>Neopterygii</taxon>
        <taxon>Teleostei</taxon>
        <taxon>Protacanthopterygii</taxon>
        <taxon>Salmoniformes</taxon>
        <taxon>Salmonidae</taxon>
        <taxon>Coregoninae</taxon>
        <taxon>Coregonus</taxon>
    </lineage>
</organism>
<feature type="signal peptide" evidence="1">
    <location>
        <begin position="1"/>
        <end position="24"/>
    </location>
</feature>
<feature type="chain" id="PRO_0000011686" description="Gonadotropin subunit beta-2">
    <location>
        <begin position="25"/>
        <end position="142"/>
    </location>
</feature>
<feature type="glycosylation site" description="N-linked (GlcNAc...) asparagine" evidence="2">
    <location>
        <position position="34"/>
    </location>
</feature>
<feature type="disulfide bond" evidence="1">
    <location>
        <begin position="30"/>
        <end position="78"/>
    </location>
</feature>
<feature type="disulfide bond" evidence="1">
    <location>
        <begin position="44"/>
        <end position="93"/>
    </location>
</feature>
<feature type="disulfide bond" evidence="1">
    <location>
        <begin position="47"/>
        <end position="131"/>
    </location>
</feature>
<feature type="disulfide bond" evidence="1">
    <location>
        <begin position="55"/>
        <end position="109"/>
    </location>
</feature>
<feature type="disulfide bond" evidence="1">
    <location>
        <begin position="59"/>
        <end position="111"/>
    </location>
</feature>
<feature type="disulfide bond" evidence="1">
    <location>
        <begin position="114"/>
        <end position="121"/>
    </location>
</feature>
<name>GTHB2_CORAU</name>
<proteinExistence type="evidence at transcript level"/>
<comment type="function">
    <text>Involved in gametogenesis and steroidogenesis.</text>
</comment>
<comment type="subunit">
    <text>Heterodimer of an alpha and a beta chain.</text>
</comment>
<comment type="subcellular location">
    <subcellularLocation>
        <location>Secreted</location>
    </subcellularLocation>
</comment>
<comment type="similarity">
    <text evidence="3">Belongs to the glycoprotein hormones subunit beta family.</text>
</comment>
<accession>P48251</accession>
<reference key="1">
    <citation type="journal article" date="1994" name="Mol. Biol. (Mosk.)">
        <title>Cloning and sequencing the cDNA for the beta-subunit of Baikal omul gonadotropin.</title>
        <authorList>
            <person name="Trofimova I.N."/>
            <person name="Belikov S.I."/>
        </authorList>
    </citation>
    <scope>NUCLEOTIDE SEQUENCE [MRNA]</scope>
    <source>
        <tissue>Pituitary</tissue>
    </source>
</reference>
<evidence type="ECO:0000250" key="1"/>
<evidence type="ECO:0000255" key="2"/>
<evidence type="ECO:0000305" key="3"/>